<reference key="1">
    <citation type="journal article" date="2009" name="Appl. Environ. Microbiol.">
        <title>Rhizobium sp. strain NGR234 possesses a remarkable number of secretion systems.</title>
        <authorList>
            <person name="Schmeisser C."/>
            <person name="Liesegang H."/>
            <person name="Krysciak D."/>
            <person name="Bakkou N."/>
            <person name="Le Quere A."/>
            <person name="Wollherr A."/>
            <person name="Heinemeyer I."/>
            <person name="Morgenstern B."/>
            <person name="Pommerening-Roeser A."/>
            <person name="Flores M."/>
            <person name="Palacios R."/>
            <person name="Brenner S."/>
            <person name="Gottschalk G."/>
            <person name="Schmitz R.A."/>
            <person name="Broughton W.J."/>
            <person name="Perret X."/>
            <person name="Strittmatter A.W."/>
            <person name="Streit W.R."/>
        </authorList>
    </citation>
    <scope>NUCLEOTIDE SEQUENCE [LARGE SCALE GENOMIC DNA]</scope>
    <source>
        <strain>NBRC 101917 / NGR234</strain>
    </source>
</reference>
<sequence length="595" mass="67145">MHRYRSHTCAALRKSDVGSTVRLSGWVHRVRDHGGVLFIDLRDHYGMTQVVADPDSPAFKMAETVRGEWVIRIDGTVKARTDDTVNKNMPTGEIELYAREIEVLSAAKELPLPVFGEPDYPEDVRLKYRFLDLRRETLHRNIVKRTEVISAMRRGMSDIGFTEYTTPILTASSPEGARDFLVPSRIHPGTFYALPQAPQQYKQLLMVAGFDRYFQIAPCFRDEDPRADRLPGEFYQLDLEMSFVEQEDVWDTMEPMIRAIFADFADGKPVTDKFPRIPYDTAIRKYGSDKPDLRNPIEMQEVTQHFAGSGFKVFANMIATNPKVEIWAIPAKTGGSRAFCDRMNAWAQSQGQPGLGYIFWRKEGEKLEGAGPLAKNIGEERTDAIRTQLGLEDGDACFFVAGEPAKFYKFAGEARTRAGEELNLVDRDRFELCWIVDFPFYEWNEDEKRVDFAHNPFSMPQGGLKALSGDDLLSIKAFQYDMVCNGFEIASGSIRNQSPELMVKAFENVGLSQADVEEQFGGLYRAFQYGAPPHGGMAFGIDRIVMLIVGAKNLREISLFPMNQQAVDLLMGAPSPATPAQLRELAIRPIPQKKD</sequence>
<feature type="chain" id="PRO_1000199005" description="Aspartate--tRNA(Asp/Asn) ligase">
    <location>
        <begin position="1"/>
        <end position="595"/>
    </location>
</feature>
<feature type="region of interest" description="Aspartate" evidence="1">
    <location>
        <begin position="199"/>
        <end position="202"/>
    </location>
</feature>
<feature type="binding site" evidence="1">
    <location>
        <position position="175"/>
    </location>
    <ligand>
        <name>L-aspartate</name>
        <dbReference type="ChEBI" id="CHEBI:29991"/>
    </ligand>
</feature>
<feature type="binding site" evidence="1">
    <location>
        <begin position="221"/>
        <end position="223"/>
    </location>
    <ligand>
        <name>ATP</name>
        <dbReference type="ChEBI" id="CHEBI:30616"/>
    </ligand>
</feature>
<feature type="binding site" evidence="1">
    <location>
        <position position="221"/>
    </location>
    <ligand>
        <name>L-aspartate</name>
        <dbReference type="ChEBI" id="CHEBI:29991"/>
    </ligand>
</feature>
<feature type="binding site" evidence="1">
    <location>
        <position position="454"/>
    </location>
    <ligand>
        <name>L-aspartate</name>
        <dbReference type="ChEBI" id="CHEBI:29991"/>
    </ligand>
</feature>
<feature type="binding site" evidence="1">
    <location>
        <position position="488"/>
    </location>
    <ligand>
        <name>ATP</name>
        <dbReference type="ChEBI" id="CHEBI:30616"/>
    </ligand>
</feature>
<feature type="binding site" evidence="1">
    <location>
        <position position="495"/>
    </location>
    <ligand>
        <name>L-aspartate</name>
        <dbReference type="ChEBI" id="CHEBI:29991"/>
    </ligand>
</feature>
<feature type="binding site" evidence="1">
    <location>
        <begin position="540"/>
        <end position="543"/>
    </location>
    <ligand>
        <name>ATP</name>
        <dbReference type="ChEBI" id="CHEBI:30616"/>
    </ligand>
</feature>
<feature type="site" description="Important for tRNA non-discrimination" evidence="1">
    <location>
        <position position="33"/>
    </location>
</feature>
<dbReference type="EC" id="6.1.1.23" evidence="1"/>
<dbReference type="EMBL" id="CP001389">
    <property type="protein sequence ID" value="ACP24734.1"/>
    <property type="molecule type" value="Genomic_DNA"/>
</dbReference>
<dbReference type="RefSeq" id="WP_012707518.1">
    <property type="nucleotide sequence ID" value="NC_012587.1"/>
</dbReference>
<dbReference type="RefSeq" id="YP_002825487.1">
    <property type="nucleotide sequence ID" value="NC_012587.1"/>
</dbReference>
<dbReference type="SMR" id="C3M9G8"/>
<dbReference type="STRING" id="394.NGR_c09440"/>
<dbReference type="KEGG" id="rhi:NGR_c09440"/>
<dbReference type="PATRIC" id="fig|394.7.peg.3763"/>
<dbReference type="eggNOG" id="COG0173">
    <property type="taxonomic scope" value="Bacteria"/>
</dbReference>
<dbReference type="HOGENOM" id="CLU_014330_3_2_5"/>
<dbReference type="OrthoDB" id="9802326at2"/>
<dbReference type="Proteomes" id="UP000001054">
    <property type="component" value="Chromosome"/>
</dbReference>
<dbReference type="GO" id="GO:0005737">
    <property type="term" value="C:cytoplasm"/>
    <property type="evidence" value="ECO:0007669"/>
    <property type="project" value="UniProtKB-SubCell"/>
</dbReference>
<dbReference type="GO" id="GO:0004815">
    <property type="term" value="F:aspartate-tRNA ligase activity"/>
    <property type="evidence" value="ECO:0007669"/>
    <property type="project" value="UniProtKB-UniRule"/>
</dbReference>
<dbReference type="GO" id="GO:0050560">
    <property type="term" value="F:aspartate-tRNA(Asn) ligase activity"/>
    <property type="evidence" value="ECO:0007669"/>
    <property type="project" value="UniProtKB-EC"/>
</dbReference>
<dbReference type="GO" id="GO:0005524">
    <property type="term" value="F:ATP binding"/>
    <property type="evidence" value="ECO:0007669"/>
    <property type="project" value="UniProtKB-UniRule"/>
</dbReference>
<dbReference type="GO" id="GO:0003676">
    <property type="term" value="F:nucleic acid binding"/>
    <property type="evidence" value="ECO:0007669"/>
    <property type="project" value="InterPro"/>
</dbReference>
<dbReference type="GO" id="GO:0006422">
    <property type="term" value="P:aspartyl-tRNA aminoacylation"/>
    <property type="evidence" value="ECO:0007669"/>
    <property type="project" value="UniProtKB-UniRule"/>
</dbReference>
<dbReference type="CDD" id="cd00777">
    <property type="entry name" value="AspRS_core"/>
    <property type="match status" value="1"/>
</dbReference>
<dbReference type="CDD" id="cd04317">
    <property type="entry name" value="EcAspRS_like_N"/>
    <property type="match status" value="1"/>
</dbReference>
<dbReference type="Gene3D" id="3.30.930.10">
    <property type="entry name" value="Bira Bifunctional Protein, Domain 2"/>
    <property type="match status" value="1"/>
</dbReference>
<dbReference type="Gene3D" id="3.30.1360.30">
    <property type="entry name" value="GAD-like domain"/>
    <property type="match status" value="1"/>
</dbReference>
<dbReference type="Gene3D" id="2.40.50.140">
    <property type="entry name" value="Nucleic acid-binding proteins"/>
    <property type="match status" value="1"/>
</dbReference>
<dbReference type="HAMAP" id="MF_00044">
    <property type="entry name" value="Asp_tRNA_synth_type1"/>
    <property type="match status" value="1"/>
</dbReference>
<dbReference type="InterPro" id="IPR004364">
    <property type="entry name" value="Aa-tRNA-synt_II"/>
</dbReference>
<dbReference type="InterPro" id="IPR006195">
    <property type="entry name" value="aa-tRNA-synth_II"/>
</dbReference>
<dbReference type="InterPro" id="IPR045864">
    <property type="entry name" value="aa-tRNA-synth_II/BPL/LPL"/>
</dbReference>
<dbReference type="InterPro" id="IPR004524">
    <property type="entry name" value="Asp-tRNA-ligase_1"/>
</dbReference>
<dbReference type="InterPro" id="IPR047089">
    <property type="entry name" value="Asp-tRNA-ligase_1_N"/>
</dbReference>
<dbReference type="InterPro" id="IPR002312">
    <property type="entry name" value="Asp/Asn-tRNA-synth_IIb"/>
</dbReference>
<dbReference type="InterPro" id="IPR047090">
    <property type="entry name" value="AspRS_core"/>
</dbReference>
<dbReference type="InterPro" id="IPR004115">
    <property type="entry name" value="GAD-like_sf"/>
</dbReference>
<dbReference type="InterPro" id="IPR029351">
    <property type="entry name" value="GAD_dom"/>
</dbReference>
<dbReference type="InterPro" id="IPR012340">
    <property type="entry name" value="NA-bd_OB-fold"/>
</dbReference>
<dbReference type="InterPro" id="IPR004365">
    <property type="entry name" value="NA-bd_OB_tRNA"/>
</dbReference>
<dbReference type="NCBIfam" id="TIGR00459">
    <property type="entry name" value="aspS_bact"/>
    <property type="match status" value="1"/>
</dbReference>
<dbReference type="NCBIfam" id="NF001750">
    <property type="entry name" value="PRK00476.1"/>
    <property type="match status" value="1"/>
</dbReference>
<dbReference type="PANTHER" id="PTHR22594:SF5">
    <property type="entry name" value="ASPARTATE--TRNA LIGASE, MITOCHONDRIAL"/>
    <property type="match status" value="1"/>
</dbReference>
<dbReference type="PANTHER" id="PTHR22594">
    <property type="entry name" value="ASPARTYL/LYSYL-TRNA SYNTHETASE"/>
    <property type="match status" value="1"/>
</dbReference>
<dbReference type="Pfam" id="PF02938">
    <property type="entry name" value="GAD"/>
    <property type="match status" value="1"/>
</dbReference>
<dbReference type="Pfam" id="PF00152">
    <property type="entry name" value="tRNA-synt_2"/>
    <property type="match status" value="1"/>
</dbReference>
<dbReference type="Pfam" id="PF01336">
    <property type="entry name" value="tRNA_anti-codon"/>
    <property type="match status" value="1"/>
</dbReference>
<dbReference type="PRINTS" id="PR01042">
    <property type="entry name" value="TRNASYNTHASP"/>
</dbReference>
<dbReference type="SUPFAM" id="SSF55681">
    <property type="entry name" value="Class II aaRS and biotin synthetases"/>
    <property type="match status" value="1"/>
</dbReference>
<dbReference type="SUPFAM" id="SSF55261">
    <property type="entry name" value="GAD domain-like"/>
    <property type="match status" value="1"/>
</dbReference>
<dbReference type="SUPFAM" id="SSF50249">
    <property type="entry name" value="Nucleic acid-binding proteins"/>
    <property type="match status" value="1"/>
</dbReference>
<dbReference type="PROSITE" id="PS50862">
    <property type="entry name" value="AA_TRNA_LIGASE_II"/>
    <property type="match status" value="1"/>
</dbReference>
<gene>
    <name evidence="1" type="primary">aspS</name>
    <name type="ordered locus">NGR_c09440</name>
</gene>
<accession>C3M9G8</accession>
<name>SYDND_SINFN</name>
<comment type="function">
    <text evidence="1">Aspartyl-tRNA synthetase with relaxed tRNA specificity since it is able to aspartylate not only its cognate tRNA(Asp) but also tRNA(Asn). Reaction proceeds in two steps: L-aspartate is first activated by ATP to form Asp-AMP and then transferred to the acceptor end of tRNA(Asp/Asn).</text>
</comment>
<comment type="catalytic activity">
    <reaction evidence="1">
        <text>tRNA(Asx) + L-aspartate + ATP = L-aspartyl-tRNA(Asx) + AMP + diphosphate</text>
        <dbReference type="Rhea" id="RHEA:18349"/>
        <dbReference type="Rhea" id="RHEA-COMP:9710"/>
        <dbReference type="Rhea" id="RHEA-COMP:9711"/>
        <dbReference type="ChEBI" id="CHEBI:29991"/>
        <dbReference type="ChEBI" id="CHEBI:30616"/>
        <dbReference type="ChEBI" id="CHEBI:33019"/>
        <dbReference type="ChEBI" id="CHEBI:78442"/>
        <dbReference type="ChEBI" id="CHEBI:78516"/>
        <dbReference type="ChEBI" id="CHEBI:456215"/>
        <dbReference type="EC" id="6.1.1.23"/>
    </reaction>
</comment>
<comment type="subunit">
    <text evidence="1">Homodimer.</text>
</comment>
<comment type="subcellular location">
    <subcellularLocation>
        <location evidence="1">Cytoplasm</location>
    </subcellularLocation>
</comment>
<comment type="similarity">
    <text evidence="1">Belongs to the class-II aminoacyl-tRNA synthetase family. Type 1 subfamily.</text>
</comment>
<proteinExistence type="inferred from homology"/>
<evidence type="ECO:0000255" key="1">
    <source>
        <dbReference type="HAMAP-Rule" id="MF_00044"/>
    </source>
</evidence>
<organism>
    <name type="scientific">Sinorhizobium fredii (strain NBRC 101917 / NGR234)</name>
    <dbReference type="NCBI Taxonomy" id="394"/>
    <lineage>
        <taxon>Bacteria</taxon>
        <taxon>Pseudomonadati</taxon>
        <taxon>Pseudomonadota</taxon>
        <taxon>Alphaproteobacteria</taxon>
        <taxon>Hyphomicrobiales</taxon>
        <taxon>Rhizobiaceae</taxon>
        <taxon>Sinorhizobium/Ensifer group</taxon>
        <taxon>Sinorhizobium</taxon>
    </lineage>
</organism>
<protein>
    <recommendedName>
        <fullName evidence="1">Aspartate--tRNA(Asp/Asn) ligase</fullName>
        <ecNumber evidence="1">6.1.1.23</ecNumber>
    </recommendedName>
    <alternativeName>
        <fullName evidence="1">Aspartyl-tRNA synthetase</fullName>
        <shortName evidence="1">AspRS</shortName>
    </alternativeName>
    <alternativeName>
        <fullName evidence="1">Non-discriminating aspartyl-tRNA synthetase</fullName>
        <shortName evidence="1">ND-AspRS</shortName>
    </alternativeName>
</protein>
<keyword id="KW-0030">Aminoacyl-tRNA synthetase</keyword>
<keyword id="KW-0067">ATP-binding</keyword>
<keyword id="KW-0963">Cytoplasm</keyword>
<keyword id="KW-0436">Ligase</keyword>
<keyword id="KW-0547">Nucleotide-binding</keyword>
<keyword id="KW-0648">Protein biosynthesis</keyword>
<keyword id="KW-1185">Reference proteome</keyword>